<reference key="1">
    <citation type="journal article" date="2005" name="Jpn. Agric. Res. Q.">
        <title>Genome sequence of Xanthomonas oryzae pv. oryzae suggests contribution of large numbers of effector genes and insertion sequences to its race diversity.</title>
        <authorList>
            <person name="Ochiai H."/>
            <person name="Inoue Y."/>
            <person name="Takeya M."/>
            <person name="Sasaki A."/>
            <person name="Kaku H."/>
        </authorList>
    </citation>
    <scope>NUCLEOTIDE SEQUENCE [LARGE SCALE GENOMIC DNA]</scope>
    <source>
        <strain>MAFF 311018</strain>
    </source>
</reference>
<feature type="chain" id="PRO_0000243231" description="Large ribosomal subunit protein uL22">
    <location>
        <begin position="1"/>
        <end position="113"/>
    </location>
</feature>
<keyword id="KW-0687">Ribonucleoprotein</keyword>
<keyword id="KW-0689">Ribosomal protein</keyword>
<keyword id="KW-0694">RNA-binding</keyword>
<keyword id="KW-0699">rRNA-binding</keyword>
<name>RL22_XANOM</name>
<dbReference type="EMBL" id="AP008229">
    <property type="protein sequence ID" value="BAE70137.1"/>
    <property type="molecule type" value="Genomic_DNA"/>
</dbReference>
<dbReference type="SMR" id="Q2NZZ0"/>
<dbReference type="KEGG" id="xom:XOO3382"/>
<dbReference type="HOGENOM" id="CLU_083987_3_3_6"/>
<dbReference type="GO" id="GO:0022625">
    <property type="term" value="C:cytosolic large ribosomal subunit"/>
    <property type="evidence" value="ECO:0007669"/>
    <property type="project" value="TreeGrafter"/>
</dbReference>
<dbReference type="GO" id="GO:0019843">
    <property type="term" value="F:rRNA binding"/>
    <property type="evidence" value="ECO:0007669"/>
    <property type="project" value="UniProtKB-UniRule"/>
</dbReference>
<dbReference type="GO" id="GO:0003735">
    <property type="term" value="F:structural constituent of ribosome"/>
    <property type="evidence" value="ECO:0007669"/>
    <property type="project" value="InterPro"/>
</dbReference>
<dbReference type="GO" id="GO:0006412">
    <property type="term" value="P:translation"/>
    <property type="evidence" value="ECO:0007669"/>
    <property type="project" value="UniProtKB-UniRule"/>
</dbReference>
<dbReference type="CDD" id="cd00336">
    <property type="entry name" value="Ribosomal_L22"/>
    <property type="match status" value="1"/>
</dbReference>
<dbReference type="FunFam" id="3.90.470.10:FF:000001">
    <property type="entry name" value="50S ribosomal protein L22"/>
    <property type="match status" value="1"/>
</dbReference>
<dbReference type="Gene3D" id="3.90.470.10">
    <property type="entry name" value="Ribosomal protein L22/L17"/>
    <property type="match status" value="1"/>
</dbReference>
<dbReference type="HAMAP" id="MF_01331_B">
    <property type="entry name" value="Ribosomal_uL22_B"/>
    <property type="match status" value="1"/>
</dbReference>
<dbReference type="InterPro" id="IPR001063">
    <property type="entry name" value="Ribosomal_uL22"/>
</dbReference>
<dbReference type="InterPro" id="IPR005727">
    <property type="entry name" value="Ribosomal_uL22_bac/chlpt-type"/>
</dbReference>
<dbReference type="InterPro" id="IPR047867">
    <property type="entry name" value="Ribosomal_uL22_bac/org-type"/>
</dbReference>
<dbReference type="InterPro" id="IPR018260">
    <property type="entry name" value="Ribosomal_uL22_CS"/>
</dbReference>
<dbReference type="InterPro" id="IPR036394">
    <property type="entry name" value="Ribosomal_uL22_sf"/>
</dbReference>
<dbReference type="NCBIfam" id="TIGR01044">
    <property type="entry name" value="rplV_bact"/>
    <property type="match status" value="1"/>
</dbReference>
<dbReference type="PANTHER" id="PTHR13501">
    <property type="entry name" value="CHLOROPLAST 50S RIBOSOMAL PROTEIN L22-RELATED"/>
    <property type="match status" value="1"/>
</dbReference>
<dbReference type="PANTHER" id="PTHR13501:SF8">
    <property type="entry name" value="LARGE RIBOSOMAL SUBUNIT PROTEIN UL22M"/>
    <property type="match status" value="1"/>
</dbReference>
<dbReference type="Pfam" id="PF00237">
    <property type="entry name" value="Ribosomal_L22"/>
    <property type="match status" value="1"/>
</dbReference>
<dbReference type="SUPFAM" id="SSF54843">
    <property type="entry name" value="Ribosomal protein L22"/>
    <property type="match status" value="1"/>
</dbReference>
<dbReference type="PROSITE" id="PS00464">
    <property type="entry name" value="RIBOSOMAL_L22"/>
    <property type="match status" value="1"/>
</dbReference>
<evidence type="ECO:0000255" key="1">
    <source>
        <dbReference type="HAMAP-Rule" id="MF_01331"/>
    </source>
</evidence>
<evidence type="ECO:0000305" key="2"/>
<gene>
    <name evidence="1" type="primary">rplV</name>
    <name type="ordered locus">XOO3382</name>
</gene>
<organism>
    <name type="scientific">Xanthomonas oryzae pv. oryzae (strain MAFF 311018)</name>
    <dbReference type="NCBI Taxonomy" id="342109"/>
    <lineage>
        <taxon>Bacteria</taxon>
        <taxon>Pseudomonadati</taxon>
        <taxon>Pseudomonadota</taxon>
        <taxon>Gammaproteobacteria</taxon>
        <taxon>Lysobacterales</taxon>
        <taxon>Lysobacteraceae</taxon>
        <taxon>Xanthomonas</taxon>
    </lineage>
</organism>
<sequence>MTMEAKAILRTARISPQKARLVADQVRGLSAERAVNLLKFSDKKAAHLIKKVVESAIANAENNQGADVDELKVKTIMVDEGPSLKRFMARAKGRGTRILKRTSHITVIVGAAK</sequence>
<protein>
    <recommendedName>
        <fullName evidence="1">Large ribosomal subunit protein uL22</fullName>
    </recommendedName>
    <alternativeName>
        <fullName evidence="2">50S ribosomal protein L22</fullName>
    </alternativeName>
</protein>
<comment type="function">
    <text evidence="1">This protein binds specifically to 23S rRNA; its binding is stimulated by other ribosomal proteins, e.g. L4, L17, and L20. It is important during the early stages of 50S assembly. It makes multiple contacts with different domains of the 23S rRNA in the assembled 50S subunit and ribosome (By similarity).</text>
</comment>
<comment type="function">
    <text evidence="1">The globular domain of the protein is located near the polypeptide exit tunnel on the outside of the subunit, while an extended beta-hairpin is found that lines the wall of the exit tunnel in the center of the 70S ribosome.</text>
</comment>
<comment type="subunit">
    <text evidence="1">Part of the 50S ribosomal subunit.</text>
</comment>
<comment type="similarity">
    <text evidence="1">Belongs to the universal ribosomal protein uL22 family.</text>
</comment>
<proteinExistence type="inferred from homology"/>
<accession>Q2NZZ0</accession>